<organism>
    <name type="scientific">Moraxella bovis</name>
    <dbReference type="NCBI Taxonomy" id="476"/>
    <lineage>
        <taxon>Bacteria</taxon>
        <taxon>Pseudomonadati</taxon>
        <taxon>Pseudomonadota</taxon>
        <taxon>Gammaproteobacteria</taxon>
        <taxon>Moraxellales</taxon>
        <taxon>Moraxellaceae</taxon>
        <taxon>Moraxella</taxon>
    </lineage>
</organism>
<sequence length="157" mass="16006">MNAQKGFTLIELMIVIAIIGILAAIALPAYQDYISKSQTTRVVGELAAGKTAVDAALFEGKTPKLGKAANDTEEDIGLTTTGGTARSNLMSSVNIGGGAFATGAGTLEATLGNRANKDIAGAVITQSRDAEGVWTCTINGSAAPGWKSKFVPTGCKE</sequence>
<comment type="subunit">
    <text>The pili are polar flexible filaments of about 5.4 nanometers diameter and 2.5 micrometers average length; they consist of only a single polypeptide chain arranged in a helical configuration of five subunits per turn in the assembled pilus.</text>
</comment>
<comment type="subcellular location">
    <subcellularLocation>
        <location>Fimbrium</location>
    </subcellularLocation>
</comment>
<comment type="miscellaneous">
    <text>Moraxella bovis can express either a Q or a I pilin, the inversion of 2 kb of DNA determines which pilin is expressed.</text>
</comment>
<comment type="similarity">
    <text evidence="2">Belongs to the N-Me-Phe pilin family.</text>
</comment>
<comment type="caution">
    <text evidence="2">In PubMed:2902184 it is said that 50% of the peptides have N-methyl-Phe and 50% begin with Thr-8. N-terminal methylation produces preview during Edman degradation, which makes this appear to happen when the peptide is completely N-terminally methylated.</text>
</comment>
<gene>
    <name type="primary">tfpQ</name>
</gene>
<name>FMQ_MORBO</name>
<keyword id="KW-0903">Direct protein sequencing</keyword>
<keyword id="KW-1015">Disulfide bond</keyword>
<keyword id="KW-0281">Fimbrium</keyword>
<keyword id="KW-0488">Methylation</keyword>
<protein>
    <recommendedName>
        <fullName>Fimbrial protein Q</fullName>
    </recommendedName>
    <alternativeName>
        <fullName>Beta pilin</fullName>
    </alternativeName>
    <alternativeName>
        <fullName>Q pilin</fullName>
    </alternativeName>
</protein>
<accession>P07640</accession>
<dbReference type="EMBL" id="M11435">
    <property type="protein sequence ID" value="AAA25304.1"/>
    <property type="molecule type" value="Genomic_DNA"/>
</dbReference>
<dbReference type="EMBL" id="M32345">
    <property type="protein sequence ID" value="AAA88223.1"/>
    <property type="molecule type" value="Genomic_DNA"/>
</dbReference>
<dbReference type="EMBL" id="M59712">
    <property type="protein sequence ID" value="AAA25308.1"/>
    <property type="molecule type" value="Genomic_DNA"/>
</dbReference>
<dbReference type="PIR" id="A24434">
    <property type="entry name" value="A24434"/>
</dbReference>
<dbReference type="SMR" id="P07640"/>
<dbReference type="iPTMnet" id="P07640"/>
<dbReference type="GO" id="GO:0009289">
    <property type="term" value="C:pilus"/>
    <property type="evidence" value="ECO:0007669"/>
    <property type="project" value="UniProtKB-SubCell"/>
</dbReference>
<dbReference type="GO" id="GO:0015627">
    <property type="term" value="C:type II protein secretion system complex"/>
    <property type="evidence" value="ECO:0007669"/>
    <property type="project" value="InterPro"/>
</dbReference>
<dbReference type="GO" id="GO:0007155">
    <property type="term" value="P:cell adhesion"/>
    <property type="evidence" value="ECO:0007669"/>
    <property type="project" value="InterPro"/>
</dbReference>
<dbReference type="GO" id="GO:0015628">
    <property type="term" value="P:protein secretion by the type II secretion system"/>
    <property type="evidence" value="ECO:0007669"/>
    <property type="project" value="InterPro"/>
</dbReference>
<dbReference type="Gene3D" id="3.30.700.10">
    <property type="entry name" value="Glycoprotein, Type 4 Pilin"/>
    <property type="match status" value="1"/>
</dbReference>
<dbReference type="InterPro" id="IPR000983">
    <property type="entry name" value="Bac_GSPG_pilin"/>
</dbReference>
<dbReference type="InterPro" id="IPR012902">
    <property type="entry name" value="N_methyl_site"/>
</dbReference>
<dbReference type="InterPro" id="IPR001082">
    <property type="entry name" value="Pilin"/>
</dbReference>
<dbReference type="InterPro" id="IPR045584">
    <property type="entry name" value="Pilin-like"/>
</dbReference>
<dbReference type="InterPro" id="IPR050470">
    <property type="entry name" value="T4P/T2SS_Core"/>
</dbReference>
<dbReference type="NCBIfam" id="TIGR02532">
    <property type="entry name" value="IV_pilin_GFxxxE"/>
    <property type="match status" value="1"/>
</dbReference>
<dbReference type="PANTHER" id="PTHR30093">
    <property type="entry name" value="GENERAL SECRETION PATHWAY PROTEIN G"/>
    <property type="match status" value="1"/>
</dbReference>
<dbReference type="PANTHER" id="PTHR30093:SF34">
    <property type="entry name" value="PREPILIN PEPTIDASE-DEPENDENT PROTEIN D"/>
    <property type="match status" value="1"/>
</dbReference>
<dbReference type="Pfam" id="PF07963">
    <property type="entry name" value="N_methyl"/>
    <property type="match status" value="1"/>
</dbReference>
<dbReference type="Pfam" id="PF00114">
    <property type="entry name" value="Pilin"/>
    <property type="match status" value="1"/>
</dbReference>
<dbReference type="PRINTS" id="PR00813">
    <property type="entry name" value="BCTERIALGSPG"/>
</dbReference>
<dbReference type="SUPFAM" id="SSF54523">
    <property type="entry name" value="Pili subunits"/>
    <property type="match status" value="1"/>
</dbReference>
<dbReference type="PROSITE" id="PS00409">
    <property type="entry name" value="PROKAR_NTER_METHYL"/>
    <property type="match status" value="1"/>
</dbReference>
<feature type="propeptide" id="PRO_0000024148" evidence="1">
    <location>
        <begin position="1"/>
        <end position="6"/>
    </location>
</feature>
<feature type="chain" id="PRO_0000024149" description="Fimbrial protein Q">
    <location>
        <begin position="7"/>
        <end position="157"/>
    </location>
</feature>
<feature type="modified residue" description="N-methylphenylalanine" evidence="1">
    <location>
        <position position="7"/>
    </location>
</feature>
<feature type="disulfide bond" evidence="1">
    <location>
        <begin position="136"/>
        <end position="155"/>
    </location>
</feature>
<evidence type="ECO:0000269" key="1">
    <source>
    </source>
</evidence>
<evidence type="ECO:0000305" key="2"/>
<reference key="1">
    <citation type="journal article" date="1985" name="J. Bacteriol.">
        <title>Cloning and sequencing of a Moraxella bovis pilin gene.</title>
        <authorList>
            <person name="Marrs C.F."/>
            <person name="Schoolnik G."/>
            <person name="Koomey J.M."/>
            <person name="Hardy J."/>
            <person name="Rothbard J."/>
            <person name="Falkow S."/>
        </authorList>
    </citation>
    <scope>NUCLEOTIDE SEQUENCE [GENOMIC DNA]</scope>
    <source>
        <strain>EPP63</strain>
    </source>
</reference>
<reference key="2">
    <citation type="journal article" date="1990" name="J. Bacteriol.">
        <title>Sequence analysis of the inversion region containing the pilin genes of Moraxella bovis.</title>
        <authorList>
            <person name="Fulks K.A."/>
            <person name="Marrs C.F."/>
            <person name="Stevens S.P."/>
            <person name="Green M.R."/>
        </authorList>
    </citation>
    <scope>NUCLEOTIDE SEQUENCE [GENOMIC DNA]</scope>
    <source>
        <strain>EPP63</strain>
    </source>
</reference>
<reference key="3">
    <citation type="journal article" date="1991" name="J. Bacteriol.">
        <title>Interesting sequence differences between the pilin gene inversion regions of Moraxella lacunata ATCC 17956 and Moraxella bovis Epp63.</title>
        <authorList>
            <person name="Rozsa F.W."/>
            <person name="Marrs C.F."/>
        </authorList>
    </citation>
    <scope>NUCLEOTIDE SEQUENCE [GENOMIC DNA]</scope>
</reference>
<reference key="4">
    <citation type="journal article" date="1988" name="J. Exp. Med.">
        <title>Purification, characterization, and pathogenicity of Moraxella bovis pili.</title>
        <authorList>
            <person name="Ruehl W.W."/>
            <person name="Marrs C.F."/>
            <person name="Fernandez R."/>
            <person name="Falkow S."/>
            <person name="Schoolnik G.K."/>
        </authorList>
    </citation>
    <scope>PROTEIN SEQUENCE OF 7-157</scope>
    <scope>METHYLATION AT PHE-7</scope>
    <scope>DISULFIDE BOND</scope>
</reference>
<proteinExistence type="evidence at protein level"/>